<comment type="function">
    <text evidence="1">Catalyzes the deamination of dCTP to dUTP.</text>
</comment>
<comment type="catalytic activity">
    <reaction evidence="1">
        <text>dCTP + H2O + H(+) = dUTP + NH4(+)</text>
        <dbReference type="Rhea" id="RHEA:22680"/>
        <dbReference type="ChEBI" id="CHEBI:15377"/>
        <dbReference type="ChEBI" id="CHEBI:15378"/>
        <dbReference type="ChEBI" id="CHEBI:28938"/>
        <dbReference type="ChEBI" id="CHEBI:61481"/>
        <dbReference type="ChEBI" id="CHEBI:61555"/>
        <dbReference type="EC" id="3.5.4.13"/>
    </reaction>
</comment>
<comment type="pathway">
    <text evidence="1">Pyrimidine metabolism; dUMP biosynthesis; dUMP from dCTP (dUTP route): step 1/2.</text>
</comment>
<comment type="subunit">
    <text evidence="1">Homotrimer.</text>
</comment>
<comment type="similarity">
    <text evidence="1">Belongs to the dCTP deaminase family.</text>
</comment>
<evidence type="ECO:0000255" key="1">
    <source>
        <dbReference type="HAMAP-Rule" id="MF_00146"/>
    </source>
</evidence>
<evidence type="ECO:0000256" key="2">
    <source>
        <dbReference type="SAM" id="MobiDB-lite"/>
    </source>
</evidence>
<proteinExistence type="inferred from homology"/>
<dbReference type="EC" id="3.5.4.13" evidence="1"/>
<dbReference type="EMBL" id="CP000243">
    <property type="protein sequence ID" value="ABE07809.1"/>
    <property type="molecule type" value="Genomic_DNA"/>
</dbReference>
<dbReference type="RefSeq" id="WP_001234777.1">
    <property type="nucleotide sequence ID" value="NZ_CP064825.1"/>
</dbReference>
<dbReference type="SMR" id="Q1RA05"/>
<dbReference type="KEGG" id="eci:UTI89_C2341"/>
<dbReference type="HOGENOM" id="CLU_087476_2_0_6"/>
<dbReference type="UniPathway" id="UPA00610">
    <property type="reaction ID" value="UER00665"/>
</dbReference>
<dbReference type="Proteomes" id="UP000001952">
    <property type="component" value="Chromosome"/>
</dbReference>
<dbReference type="GO" id="GO:0008829">
    <property type="term" value="F:dCTP deaminase activity"/>
    <property type="evidence" value="ECO:0007669"/>
    <property type="project" value="UniProtKB-UniRule"/>
</dbReference>
<dbReference type="GO" id="GO:0000166">
    <property type="term" value="F:nucleotide binding"/>
    <property type="evidence" value="ECO:0007669"/>
    <property type="project" value="UniProtKB-KW"/>
</dbReference>
<dbReference type="GO" id="GO:0006226">
    <property type="term" value="P:dUMP biosynthetic process"/>
    <property type="evidence" value="ECO:0007669"/>
    <property type="project" value="UniProtKB-UniPathway"/>
</dbReference>
<dbReference type="GO" id="GO:0006229">
    <property type="term" value="P:dUTP biosynthetic process"/>
    <property type="evidence" value="ECO:0007669"/>
    <property type="project" value="UniProtKB-UniRule"/>
</dbReference>
<dbReference type="GO" id="GO:0015949">
    <property type="term" value="P:nucleobase-containing small molecule interconversion"/>
    <property type="evidence" value="ECO:0007669"/>
    <property type="project" value="TreeGrafter"/>
</dbReference>
<dbReference type="CDD" id="cd07557">
    <property type="entry name" value="trimeric_dUTPase"/>
    <property type="match status" value="1"/>
</dbReference>
<dbReference type="FunFam" id="2.70.40.10:FF:000003">
    <property type="entry name" value="dCTP deaminase"/>
    <property type="match status" value="1"/>
</dbReference>
<dbReference type="Gene3D" id="2.70.40.10">
    <property type="match status" value="1"/>
</dbReference>
<dbReference type="HAMAP" id="MF_00146">
    <property type="entry name" value="dCTP_deaminase"/>
    <property type="match status" value="1"/>
</dbReference>
<dbReference type="InterPro" id="IPR011962">
    <property type="entry name" value="dCTP_deaminase"/>
</dbReference>
<dbReference type="InterPro" id="IPR036157">
    <property type="entry name" value="dUTPase-like_sf"/>
</dbReference>
<dbReference type="InterPro" id="IPR033704">
    <property type="entry name" value="dUTPase_trimeric"/>
</dbReference>
<dbReference type="NCBIfam" id="TIGR02274">
    <property type="entry name" value="dCTP_deam"/>
    <property type="match status" value="1"/>
</dbReference>
<dbReference type="PANTHER" id="PTHR42680">
    <property type="entry name" value="DCTP DEAMINASE"/>
    <property type="match status" value="1"/>
</dbReference>
<dbReference type="PANTHER" id="PTHR42680:SF3">
    <property type="entry name" value="DCTP DEAMINASE"/>
    <property type="match status" value="1"/>
</dbReference>
<dbReference type="Pfam" id="PF22769">
    <property type="entry name" value="DCD"/>
    <property type="match status" value="1"/>
</dbReference>
<dbReference type="SUPFAM" id="SSF51283">
    <property type="entry name" value="dUTPase-like"/>
    <property type="match status" value="1"/>
</dbReference>
<feature type="chain" id="PRO_1000009718" description="dCTP deaminase">
    <location>
        <begin position="1"/>
        <end position="193"/>
    </location>
</feature>
<feature type="region of interest" description="Disordered" evidence="2">
    <location>
        <begin position="169"/>
        <end position="193"/>
    </location>
</feature>
<feature type="active site" description="Proton donor/acceptor" evidence="1">
    <location>
        <position position="138"/>
    </location>
</feature>
<feature type="binding site" evidence="1">
    <location>
        <begin position="110"/>
        <end position="115"/>
    </location>
    <ligand>
        <name>dCTP</name>
        <dbReference type="ChEBI" id="CHEBI:61481"/>
    </ligand>
</feature>
<feature type="binding site" evidence="1">
    <location>
        <position position="128"/>
    </location>
    <ligand>
        <name>dCTP</name>
        <dbReference type="ChEBI" id="CHEBI:61481"/>
    </ligand>
</feature>
<feature type="binding site" evidence="1">
    <location>
        <begin position="136"/>
        <end position="138"/>
    </location>
    <ligand>
        <name>dCTP</name>
        <dbReference type="ChEBI" id="CHEBI:61481"/>
    </ligand>
</feature>
<feature type="binding site" evidence="1">
    <location>
        <position position="171"/>
    </location>
    <ligand>
        <name>dCTP</name>
        <dbReference type="ChEBI" id="CHEBI:61481"/>
    </ligand>
</feature>
<feature type="binding site" evidence="1">
    <location>
        <position position="178"/>
    </location>
    <ligand>
        <name>dCTP</name>
        <dbReference type="ChEBI" id="CHEBI:61481"/>
    </ligand>
</feature>
<feature type="binding site" evidence="1">
    <location>
        <position position="182"/>
    </location>
    <ligand>
        <name>dCTP</name>
        <dbReference type="ChEBI" id="CHEBI:61481"/>
    </ligand>
</feature>
<sequence>MRLCDRDIEAWLDEGRLSINPRPPVERINGATVDVRLGNKFRTFRGHTAAFIDLSGPKDEVSAALDRVMSDEIVLDESEAFYLHPGELALAVTLESVTLPADLVGWLDGRSSLARLGLMVHVTAHRIDPGWSGCIVLEFYNSGKLPLALRPGMLIGALSFEPLSGPAARPYNRREDAKYRNQQGAVASRIDKD</sequence>
<name>DCD_ECOUT</name>
<protein>
    <recommendedName>
        <fullName evidence="1">dCTP deaminase</fullName>
        <ecNumber evidence="1">3.5.4.13</ecNumber>
    </recommendedName>
    <alternativeName>
        <fullName evidence="1">Deoxycytidine triphosphate deaminase</fullName>
    </alternativeName>
</protein>
<keyword id="KW-0378">Hydrolase</keyword>
<keyword id="KW-0546">Nucleotide metabolism</keyword>
<keyword id="KW-0547">Nucleotide-binding</keyword>
<accession>Q1RA05</accession>
<reference key="1">
    <citation type="journal article" date="2006" name="Proc. Natl. Acad. Sci. U.S.A.">
        <title>Identification of genes subject to positive selection in uropathogenic strains of Escherichia coli: a comparative genomics approach.</title>
        <authorList>
            <person name="Chen S.L."/>
            <person name="Hung C.-S."/>
            <person name="Xu J."/>
            <person name="Reigstad C.S."/>
            <person name="Magrini V."/>
            <person name="Sabo A."/>
            <person name="Blasiar D."/>
            <person name="Bieri T."/>
            <person name="Meyer R.R."/>
            <person name="Ozersky P."/>
            <person name="Armstrong J.R."/>
            <person name="Fulton R.S."/>
            <person name="Latreille J.P."/>
            <person name="Spieth J."/>
            <person name="Hooton T.M."/>
            <person name="Mardis E.R."/>
            <person name="Hultgren S.J."/>
            <person name="Gordon J.I."/>
        </authorList>
    </citation>
    <scope>NUCLEOTIDE SEQUENCE [LARGE SCALE GENOMIC DNA]</scope>
    <source>
        <strain>UTI89 / UPEC</strain>
    </source>
</reference>
<organism>
    <name type="scientific">Escherichia coli (strain UTI89 / UPEC)</name>
    <dbReference type="NCBI Taxonomy" id="364106"/>
    <lineage>
        <taxon>Bacteria</taxon>
        <taxon>Pseudomonadati</taxon>
        <taxon>Pseudomonadota</taxon>
        <taxon>Gammaproteobacteria</taxon>
        <taxon>Enterobacterales</taxon>
        <taxon>Enterobacteriaceae</taxon>
        <taxon>Escherichia</taxon>
    </lineage>
</organism>
<gene>
    <name evidence="1" type="primary">dcd</name>
    <name type="ordered locus">UTI89_C2341</name>
</gene>